<reference key="1">
    <citation type="journal article" date="1984" name="Hoppe-Seyler's Z. Physiol. Chem.">
        <title>Minor polypeptides from the phycobilisome of the cyanobacterium Mastigocladus laminosus. Isolation, characterization and amino-acid sequences of a colourless 8.9-kDa polypeptide and of a 16.2-kDa phycobiliprotein.</title>
        <authorList>
            <person name="Fueglistaller P."/>
            <person name="Ruembeli R."/>
            <person name="Suter F."/>
            <person name="Zuber H."/>
        </authorList>
    </citation>
    <scope>PROTEIN SEQUENCE</scope>
</reference>
<reference key="2">
    <citation type="journal article" date="1999" name="Proc. Natl. Acad. Sci. U.S.A.">
        <title>Structural analysis at 2.2 A of orthorhombic crystals presents the asymmetry of the allophycocyanin-linker complex, AP.LC7.8, from phycobilisomes of Mastigocladus laminosus.</title>
        <authorList>
            <person name="Reuter W."/>
            <person name="Wiegand G."/>
            <person name="Huber R."/>
            <person name="Than M.E."/>
        </authorList>
    </citation>
    <scope>X-RAY CRYSTALLOGRAPHY (2.3 ANGSTROMS)</scope>
    <source>
        <strain>PCC 7603</strain>
    </source>
</reference>
<sequence>GRLFKITACVPSQTRIRTQRELQNTYFTKLVPYENWFREQQRIQKMGGKIVKVELATGKQGINTGLA</sequence>
<organism>
    <name type="scientific">Mastigocladus laminosus</name>
    <name type="common">Fischerella sp.</name>
    <dbReference type="NCBI Taxonomy" id="83541"/>
    <lineage>
        <taxon>Bacteria</taxon>
        <taxon>Bacillati</taxon>
        <taxon>Cyanobacteriota</taxon>
        <taxon>Cyanophyceae</taxon>
        <taxon>Nostocales</taxon>
        <taxon>Hapalosiphonaceae</taxon>
        <taxon>Mastigocladus</taxon>
    </lineage>
</organism>
<keyword id="KW-0002">3D-structure</keyword>
<keyword id="KW-0042">Antenna complex</keyword>
<keyword id="KW-0903">Direct protein sequencing</keyword>
<keyword id="KW-0472">Membrane</keyword>
<keyword id="KW-0602">Photosynthesis</keyword>
<keyword id="KW-0605">Phycobilisome</keyword>
<keyword id="KW-0793">Thylakoid</keyword>
<comment type="function">
    <text>Rod linker protein, associated with allophycocyanin. Linker polypeptides determine the state of aggregation and the location of the disk-shaped phycobiliprotein units within the phycobilisome and modulate their spectroscopic properties in order to mediate a directed and optimal energy transfer.</text>
</comment>
<comment type="subcellular location">
    <subcellularLocation>
        <location>Cellular thylakoid membrane</location>
        <topology>Peripheral membrane protein</topology>
        <orientation>Cytoplasmic side</orientation>
    </subcellularLocation>
    <text>This protein occurs in the rod, it is associated with allophycocyanin.</text>
</comment>
<comment type="similarity">
    <text evidence="2">Belongs to the phycobilisome linker protein family.</text>
</comment>
<proteinExistence type="evidence at protein level"/>
<feature type="chain" id="PRO_0000199235" description="Phycobilisome 7.8 kDa linker polypeptide, allophycocyanin-associated, core">
    <location>
        <begin position="1"/>
        <end position="67"/>
    </location>
</feature>
<feature type="domain" description="CpcD-like" evidence="1">
    <location>
        <begin position="1"/>
        <end position="56"/>
    </location>
</feature>
<feature type="sequence variant">
    <original>C</original>
    <variation>S</variation>
    <location>
        <position position="9"/>
    </location>
</feature>
<feature type="strand" evidence="3">
    <location>
        <begin position="3"/>
        <end position="9"/>
    </location>
</feature>
<feature type="helix" evidence="3">
    <location>
        <begin position="22"/>
        <end position="25"/>
    </location>
</feature>
<feature type="strand" evidence="3">
    <location>
        <begin position="26"/>
        <end position="32"/>
    </location>
</feature>
<feature type="helix" evidence="3">
    <location>
        <begin position="33"/>
        <end position="45"/>
    </location>
</feature>
<feature type="strand" evidence="3">
    <location>
        <begin position="49"/>
        <end position="55"/>
    </location>
</feature>
<evidence type="ECO:0000255" key="1">
    <source>
        <dbReference type="PROSITE-ProRule" id="PRU00771"/>
    </source>
</evidence>
<evidence type="ECO:0000305" key="2"/>
<evidence type="ECO:0007829" key="3">
    <source>
        <dbReference type="PDB" id="1B33"/>
    </source>
</evidence>
<protein>
    <recommendedName>
        <fullName>Phycobilisome 7.8 kDa linker polypeptide, allophycocyanin-associated, core</fullName>
    </recommendedName>
    <alternativeName>
        <fullName>LC 7.8</fullName>
    </alternativeName>
</protein>
<name>PYC1_MASLA</name>
<gene>
    <name type="primary">apcC</name>
</gene>
<accession>P20116</accession>
<dbReference type="PIR" id="S00284">
    <property type="entry name" value="S00284"/>
</dbReference>
<dbReference type="PDB" id="1B33">
    <property type="method" value="X-ray"/>
    <property type="resolution" value="2.30 A"/>
    <property type="chains" value="N/O=1-67"/>
</dbReference>
<dbReference type="PDBsum" id="1B33"/>
<dbReference type="SMR" id="P20116"/>
<dbReference type="EvolutionaryTrace" id="P20116"/>
<dbReference type="GO" id="GO:0030089">
    <property type="term" value="C:phycobilisome"/>
    <property type="evidence" value="ECO:0007669"/>
    <property type="project" value="UniProtKB-KW"/>
</dbReference>
<dbReference type="GO" id="GO:0031676">
    <property type="term" value="C:plasma membrane-derived thylakoid membrane"/>
    <property type="evidence" value="ECO:0007669"/>
    <property type="project" value="UniProtKB-SubCell"/>
</dbReference>
<dbReference type="GO" id="GO:0015979">
    <property type="term" value="P:photosynthesis"/>
    <property type="evidence" value="ECO:0007669"/>
    <property type="project" value="UniProtKB-KW"/>
</dbReference>
<dbReference type="Gene3D" id="3.30.1490.170">
    <property type="entry name" value="Allophycocyanin linker chain (domain)"/>
    <property type="match status" value="1"/>
</dbReference>
<dbReference type="InterPro" id="IPR011134">
    <property type="entry name" value="Allophyco_linker"/>
</dbReference>
<dbReference type="InterPro" id="IPR011064">
    <property type="entry name" value="Allophyco_linker_chain"/>
</dbReference>
<dbReference type="InterPro" id="IPR008213">
    <property type="entry name" value="CpcD-like_dom"/>
</dbReference>
<dbReference type="Pfam" id="PF01383">
    <property type="entry name" value="CpcD"/>
    <property type="match status" value="1"/>
</dbReference>
<dbReference type="PIRSF" id="PIRSF000083">
    <property type="entry name" value="Allophyco_linker"/>
    <property type="match status" value="1"/>
</dbReference>
<dbReference type="SMART" id="SM01094">
    <property type="entry name" value="CpcD"/>
    <property type="match status" value="1"/>
</dbReference>
<dbReference type="SUPFAM" id="SSF54580">
    <property type="entry name" value="Allophycocyanin linker chain (domain)"/>
    <property type="match status" value="1"/>
</dbReference>
<dbReference type="PROSITE" id="PS51441">
    <property type="entry name" value="CPCD_LIKE"/>
    <property type="match status" value="1"/>
</dbReference>